<accession>Q8Y7F6</accession>
<name>IF2_LISMO</name>
<evidence type="ECO:0000250" key="1"/>
<evidence type="ECO:0000255" key="2">
    <source>
        <dbReference type="HAMAP-Rule" id="MF_00100"/>
    </source>
</evidence>
<evidence type="ECO:0000256" key="3">
    <source>
        <dbReference type="SAM" id="MobiDB-lite"/>
    </source>
</evidence>
<gene>
    <name evidence="2" type="primary">infB</name>
    <name type="ordered locus">lmo1325</name>
</gene>
<proteinExistence type="inferred from homology"/>
<organism>
    <name type="scientific">Listeria monocytogenes serovar 1/2a (strain ATCC BAA-679 / EGD-e)</name>
    <dbReference type="NCBI Taxonomy" id="169963"/>
    <lineage>
        <taxon>Bacteria</taxon>
        <taxon>Bacillati</taxon>
        <taxon>Bacillota</taxon>
        <taxon>Bacilli</taxon>
        <taxon>Bacillales</taxon>
        <taxon>Listeriaceae</taxon>
        <taxon>Listeria</taxon>
    </lineage>
</organism>
<comment type="function">
    <text evidence="2">One of the essential components for the initiation of protein synthesis. Protects formylmethionyl-tRNA from spontaneous hydrolysis and promotes its binding to the 30S ribosomal subunits. Also involved in the hydrolysis of GTP during the formation of the 70S ribosomal complex.</text>
</comment>
<comment type="subcellular location">
    <subcellularLocation>
        <location evidence="2">Cytoplasm</location>
    </subcellularLocation>
</comment>
<comment type="similarity">
    <text evidence="2">Belongs to the TRAFAC class translation factor GTPase superfamily. Classic translation factor GTPase family. IF-2 subfamily.</text>
</comment>
<feature type="chain" id="PRO_0000137219" description="Translation initiation factor IF-2">
    <location>
        <begin position="1"/>
        <end position="779"/>
    </location>
</feature>
<feature type="domain" description="tr-type G">
    <location>
        <begin position="280"/>
        <end position="449"/>
    </location>
</feature>
<feature type="region of interest" description="Disordered" evidence="3">
    <location>
        <begin position="44"/>
        <end position="193"/>
    </location>
</feature>
<feature type="region of interest" description="G1" evidence="1">
    <location>
        <begin position="289"/>
        <end position="296"/>
    </location>
</feature>
<feature type="region of interest" description="G2" evidence="1">
    <location>
        <begin position="314"/>
        <end position="318"/>
    </location>
</feature>
<feature type="region of interest" description="G3" evidence="1">
    <location>
        <begin position="335"/>
        <end position="338"/>
    </location>
</feature>
<feature type="region of interest" description="G4" evidence="1">
    <location>
        <begin position="389"/>
        <end position="392"/>
    </location>
</feature>
<feature type="region of interest" description="G5" evidence="1">
    <location>
        <begin position="425"/>
        <end position="427"/>
    </location>
</feature>
<feature type="compositionally biased region" description="Basic and acidic residues" evidence="3">
    <location>
        <begin position="53"/>
        <end position="65"/>
    </location>
</feature>
<feature type="compositionally biased region" description="Polar residues" evidence="3">
    <location>
        <begin position="66"/>
        <end position="81"/>
    </location>
</feature>
<feature type="compositionally biased region" description="Low complexity" evidence="3">
    <location>
        <begin position="82"/>
        <end position="93"/>
    </location>
</feature>
<feature type="compositionally biased region" description="Low complexity" evidence="3">
    <location>
        <begin position="117"/>
        <end position="167"/>
    </location>
</feature>
<feature type="binding site" evidence="2">
    <location>
        <begin position="289"/>
        <end position="296"/>
    </location>
    <ligand>
        <name>GTP</name>
        <dbReference type="ChEBI" id="CHEBI:37565"/>
    </ligand>
</feature>
<feature type="binding site" evidence="2">
    <location>
        <begin position="335"/>
        <end position="339"/>
    </location>
    <ligand>
        <name>GTP</name>
        <dbReference type="ChEBI" id="CHEBI:37565"/>
    </ligand>
</feature>
<feature type="binding site" evidence="2">
    <location>
        <begin position="389"/>
        <end position="392"/>
    </location>
    <ligand>
        <name>GTP</name>
        <dbReference type="ChEBI" id="CHEBI:37565"/>
    </ligand>
</feature>
<reference key="1">
    <citation type="journal article" date="2001" name="Science">
        <title>Comparative genomics of Listeria species.</title>
        <authorList>
            <person name="Glaser P."/>
            <person name="Frangeul L."/>
            <person name="Buchrieser C."/>
            <person name="Rusniok C."/>
            <person name="Amend A."/>
            <person name="Baquero F."/>
            <person name="Berche P."/>
            <person name="Bloecker H."/>
            <person name="Brandt P."/>
            <person name="Chakraborty T."/>
            <person name="Charbit A."/>
            <person name="Chetouani F."/>
            <person name="Couve E."/>
            <person name="de Daruvar A."/>
            <person name="Dehoux P."/>
            <person name="Domann E."/>
            <person name="Dominguez-Bernal G."/>
            <person name="Duchaud E."/>
            <person name="Durant L."/>
            <person name="Dussurget O."/>
            <person name="Entian K.-D."/>
            <person name="Fsihi H."/>
            <person name="Garcia-del Portillo F."/>
            <person name="Garrido P."/>
            <person name="Gautier L."/>
            <person name="Goebel W."/>
            <person name="Gomez-Lopez N."/>
            <person name="Hain T."/>
            <person name="Hauf J."/>
            <person name="Jackson D."/>
            <person name="Jones L.-M."/>
            <person name="Kaerst U."/>
            <person name="Kreft J."/>
            <person name="Kuhn M."/>
            <person name="Kunst F."/>
            <person name="Kurapkat G."/>
            <person name="Madueno E."/>
            <person name="Maitournam A."/>
            <person name="Mata Vicente J."/>
            <person name="Ng E."/>
            <person name="Nedjari H."/>
            <person name="Nordsiek G."/>
            <person name="Novella S."/>
            <person name="de Pablos B."/>
            <person name="Perez-Diaz J.-C."/>
            <person name="Purcell R."/>
            <person name="Remmel B."/>
            <person name="Rose M."/>
            <person name="Schlueter T."/>
            <person name="Simoes N."/>
            <person name="Tierrez A."/>
            <person name="Vazquez-Boland J.-A."/>
            <person name="Voss H."/>
            <person name="Wehland J."/>
            <person name="Cossart P."/>
        </authorList>
    </citation>
    <scope>NUCLEOTIDE SEQUENCE [LARGE SCALE GENOMIC DNA]</scope>
    <source>
        <strain>ATCC BAA-679 / EGD-e</strain>
    </source>
</reference>
<dbReference type="EMBL" id="AL591978">
    <property type="protein sequence ID" value="CAC99403.1"/>
    <property type="molecule type" value="Genomic_DNA"/>
</dbReference>
<dbReference type="PIR" id="AE1240">
    <property type="entry name" value="AE1240"/>
</dbReference>
<dbReference type="RefSeq" id="NP_464850.1">
    <property type="nucleotide sequence ID" value="NC_003210.1"/>
</dbReference>
<dbReference type="RefSeq" id="WP_010990095.1">
    <property type="nucleotide sequence ID" value="NZ_CP149495.1"/>
</dbReference>
<dbReference type="SMR" id="Q8Y7F6"/>
<dbReference type="STRING" id="169963.gene:17593982"/>
<dbReference type="PaxDb" id="169963-lmo1325"/>
<dbReference type="EnsemblBacteria" id="CAC99403">
    <property type="protein sequence ID" value="CAC99403"/>
    <property type="gene ID" value="CAC99403"/>
</dbReference>
<dbReference type="GeneID" id="987704"/>
<dbReference type="KEGG" id="lmo:lmo1325"/>
<dbReference type="PATRIC" id="fig|169963.11.peg.1362"/>
<dbReference type="eggNOG" id="COG0532">
    <property type="taxonomic scope" value="Bacteria"/>
</dbReference>
<dbReference type="HOGENOM" id="CLU_006301_5_1_9"/>
<dbReference type="OrthoDB" id="9811804at2"/>
<dbReference type="PhylomeDB" id="Q8Y7F6"/>
<dbReference type="BioCyc" id="LMON169963:LMO1325-MONOMER"/>
<dbReference type="Proteomes" id="UP000000817">
    <property type="component" value="Chromosome"/>
</dbReference>
<dbReference type="GO" id="GO:0005737">
    <property type="term" value="C:cytoplasm"/>
    <property type="evidence" value="ECO:0000318"/>
    <property type="project" value="GO_Central"/>
</dbReference>
<dbReference type="GO" id="GO:0005829">
    <property type="term" value="C:cytosol"/>
    <property type="evidence" value="ECO:0000318"/>
    <property type="project" value="GO_Central"/>
</dbReference>
<dbReference type="GO" id="GO:0005525">
    <property type="term" value="F:GTP binding"/>
    <property type="evidence" value="ECO:0007669"/>
    <property type="project" value="UniProtKB-KW"/>
</dbReference>
<dbReference type="GO" id="GO:0003924">
    <property type="term" value="F:GTPase activity"/>
    <property type="evidence" value="ECO:0007669"/>
    <property type="project" value="UniProtKB-UniRule"/>
</dbReference>
<dbReference type="GO" id="GO:0003743">
    <property type="term" value="F:translation initiation factor activity"/>
    <property type="evidence" value="ECO:0000318"/>
    <property type="project" value="GO_Central"/>
</dbReference>
<dbReference type="GO" id="GO:0006413">
    <property type="term" value="P:translational initiation"/>
    <property type="evidence" value="ECO:0000318"/>
    <property type="project" value="GO_Central"/>
</dbReference>
<dbReference type="CDD" id="cd01887">
    <property type="entry name" value="IF2_eIF5B"/>
    <property type="match status" value="1"/>
</dbReference>
<dbReference type="CDD" id="cd03702">
    <property type="entry name" value="IF2_mtIF2_II"/>
    <property type="match status" value="1"/>
</dbReference>
<dbReference type="CDD" id="cd03692">
    <property type="entry name" value="mtIF2_IVc"/>
    <property type="match status" value="1"/>
</dbReference>
<dbReference type="FunFam" id="2.40.30.10:FF:000007">
    <property type="entry name" value="Translation initiation factor IF-2"/>
    <property type="match status" value="1"/>
</dbReference>
<dbReference type="FunFam" id="2.40.30.10:FF:000008">
    <property type="entry name" value="Translation initiation factor IF-2"/>
    <property type="match status" value="1"/>
</dbReference>
<dbReference type="FunFam" id="3.40.50.10050:FF:000001">
    <property type="entry name" value="Translation initiation factor IF-2"/>
    <property type="match status" value="1"/>
</dbReference>
<dbReference type="FunFam" id="3.40.50.300:FF:000019">
    <property type="entry name" value="Translation initiation factor IF-2"/>
    <property type="match status" value="1"/>
</dbReference>
<dbReference type="Gene3D" id="1.10.10.2480">
    <property type="match status" value="1"/>
</dbReference>
<dbReference type="Gene3D" id="3.40.50.300">
    <property type="entry name" value="P-loop containing nucleotide triphosphate hydrolases"/>
    <property type="match status" value="1"/>
</dbReference>
<dbReference type="Gene3D" id="2.40.30.10">
    <property type="entry name" value="Translation factors"/>
    <property type="match status" value="2"/>
</dbReference>
<dbReference type="Gene3D" id="3.40.50.10050">
    <property type="entry name" value="Translation initiation factor IF- 2, domain 3"/>
    <property type="match status" value="1"/>
</dbReference>
<dbReference type="HAMAP" id="MF_00100_B">
    <property type="entry name" value="IF_2_B"/>
    <property type="match status" value="1"/>
</dbReference>
<dbReference type="InterPro" id="IPR053905">
    <property type="entry name" value="EF-G-like_DII"/>
</dbReference>
<dbReference type="InterPro" id="IPR044145">
    <property type="entry name" value="IF2_II"/>
</dbReference>
<dbReference type="InterPro" id="IPR006847">
    <property type="entry name" value="IF2_N"/>
</dbReference>
<dbReference type="InterPro" id="IPR027417">
    <property type="entry name" value="P-loop_NTPase"/>
</dbReference>
<dbReference type="InterPro" id="IPR005225">
    <property type="entry name" value="Small_GTP-bd"/>
</dbReference>
<dbReference type="InterPro" id="IPR000795">
    <property type="entry name" value="T_Tr_GTP-bd_dom"/>
</dbReference>
<dbReference type="InterPro" id="IPR000178">
    <property type="entry name" value="TF_IF2_bacterial-like"/>
</dbReference>
<dbReference type="InterPro" id="IPR015760">
    <property type="entry name" value="TIF_IF2"/>
</dbReference>
<dbReference type="InterPro" id="IPR023115">
    <property type="entry name" value="TIF_IF2_dom3"/>
</dbReference>
<dbReference type="InterPro" id="IPR036925">
    <property type="entry name" value="TIF_IF2_dom3_sf"/>
</dbReference>
<dbReference type="InterPro" id="IPR009000">
    <property type="entry name" value="Transl_B-barrel_sf"/>
</dbReference>
<dbReference type="NCBIfam" id="TIGR00487">
    <property type="entry name" value="IF-2"/>
    <property type="match status" value="1"/>
</dbReference>
<dbReference type="NCBIfam" id="TIGR00231">
    <property type="entry name" value="small_GTP"/>
    <property type="match status" value="1"/>
</dbReference>
<dbReference type="PANTHER" id="PTHR43381:SF5">
    <property type="entry name" value="TR-TYPE G DOMAIN-CONTAINING PROTEIN"/>
    <property type="match status" value="1"/>
</dbReference>
<dbReference type="PANTHER" id="PTHR43381">
    <property type="entry name" value="TRANSLATION INITIATION FACTOR IF-2-RELATED"/>
    <property type="match status" value="1"/>
</dbReference>
<dbReference type="Pfam" id="PF22042">
    <property type="entry name" value="EF-G_D2"/>
    <property type="match status" value="1"/>
</dbReference>
<dbReference type="Pfam" id="PF00009">
    <property type="entry name" value="GTP_EFTU"/>
    <property type="match status" value="1"/>
</dbReference>
<dbReference type="Pfam" id="PF11987">
    <property type="entry name" value="IF-2"/>
    <property type="match status" value="1"/>
</dbReference>
<dbReference type="Pfam" id="PF04760">
    <property type="entry name" value="IF2_N"/>
    <property type="match status" value="2"/>
</dbReference>
<dbReference type="SUPFAM" id="SSF52156">
    <property type="entry name" value="Initiation factor IF2/eIF5b, domain 3"/>
    <property type="match status" value="1"/>
</dbReference>
<dbReference type="SUPFAM" id="SSF52540">
    <property type="entry name" value="P-loop containing nucleoside triphosphate hydrolases"/>
    <property type="match status" value="1"/>
</dbReference>
<dbReference type="SUPFAM" id="SSF50447">
    <property type="entry name" value="Translation proteins"/>
    <property type="match status" value="2"/>
</dbReference>
<dbReference type="PROSITE" id="PS51722">
    <property type="entry name" value="G_TR_2"/>
    <property type="match status" value="1"/>
</dbReference>
<dbReference type="PROSITE" id="PS01176">
    <property type="entry name" value="IF2"/>
    <property type="match status" value="1"/>
</dbReference>
<keyword id="KW-0963">Cytoplasm</keyword>
<keyword id="KW-0342">GTP-binding</keyword>
<keyword id="KW-0396">Initiation factor</keyword>
<keyword id="KW-0547">Nucleotide-binding</keyword>
<keyword id="KW-0648">Protein biosynthesis</keyword>
<keyword id="KW-1185">Reference proteome</keyword>
<sequence length="779" mass="84576">MSKVRVYEYAKEHQVSSKKVIEALKDLGIEVANHMSTINENALRQLDNAVDGTNKKAEAPKKETTSNENGNSKGPNKPNMTNSNEKSNKPNKPAGQANKPATANKSQGAKPATNKPANTSNQTQSSGTQQQAGGQKRNNSNRPGGGNSNRPGGNNRPNRGGNFNNKGRNTKKKGKLNHSTVPPTPPKPKELPEKIVFSESLTVAELAKKLYREPSELIKKLFMLGVVATINQSLDKDAIELICDDYGVQVEEEIKVDVTDLDVYFENELNEAVDESKLVERPPVVTIMGHVDHGKTTLLDSLRNTKVTLGEAGGITQHIGAYQLEIHDKKITFLDTPGHAAFTAMRARGAQITDITILVVAADDGVMPQTIEAINHAKAAGMPIIVAVNKIDKPQANPDRVMQELTEYELVPEAWGGDTIFAPISAKFGEGLENLLDMILLVSEVEELKANPDRRAIGSVIEAELDKGRGPVATLLVQDGTLNIGDPIVVGNTFGRVRAMVNDLGRRVKKVGPSTPVEITGLNDVPQAGDRFVVFEDEKTARNIGETRASRALVAQRSATNRVSLDNLFEHMKAGEMKEVNVIIKADVQGSVEALAASLRKIDVEGVNVKIIHTAVGAINESDITLAAASNAIVIGFNVRPTAQAREAAENESVDIRLHRVIYKAIDEIEAAMKGMLDPEFQEKIIGQAQVRQTINVSKVGTIAGCYVTDGKITRDSGVRIIRDGIVVFEGEIATLKRFKDDAKEVAKGYECGITVQNFNDIKEDDVIEAYVMEEIERK</sequence>
<protein>
    <recommendedName>
        <fullName evidence="2">Translation initiation factor IF-2</fullName>
    </recommendedName>
</protein>